<accession>B5YU42</accession>
<dbReference type="EMBL" id="CP001164">
    <property type="protein sequence ID" value="ACI37630.1"/>
    <property type="molecule type" value="Genomic_DNA"/>
</dbReference>
<dbReference type="RefSeq" id="WP_000024560.1">
    <property type="nucleotide sequence ID" value="NC_011353.1"/>
</dbReference>
<dbReference type="SMR" id="B5YU42"/>
<dbReference type="GeneID" id="93776412"/>
<dbReference type="KEGG" id="ecf:ECH74115_1235"/>
<dbReference type="HOGENOM" id="CLU_144710_3_1_6"/>
<dbReference type="FunFam" id="1.10.1660.10:FF:000006">
    <property type="entry name" value="Chaperone modulatory protein CbpM"/>
    <property type="match status" value="1"/>
</dbReference>
<dbReference type="Gene3D" id="1.10.1660.10">
    <property type="match status" value="1"/>
</dbReference>
<dbReference type="HAMAP" id="MF_01155">
    <property type="entry name" value="CbpM"/>
    <property type="match status" value="1"/>
</dbReference>
<dbReference type="InterPro" id="IPR022835">
    <property type="entry name" value="CbpM"/>
</dbReference>
<dbReference type="NCBIfam" id="NF007617">
    <property type="entry name" value="PRK10265.1"/>
    <property type="match status" value="1"/>
</dbReference>
<dbReference type="Pfam" id="PF13591">
    <property type="entry name" value="MerR_2"/>
    <property type="match status" value="1"/>
</dbReference>
<reference key="1">
    <citation type="journal article" date="2011" name="Proc. Natl. Acad. Sci. U.S.A.">
        <title>Genomic anatomy of Escherichia coli O157:H7 outbreaks.</title>
        <authorList>
            <person name="Eppinger M."/>
            <person name="Mammel M.K."/>
            <person name="Leclerc J.E."/>
            <person name="Ravel J."/>
            <person name="Cebula T.A."/>
        </authorList>
    </citation>
    <scope>NUCLEOTIDE SEQUENCE [LARGE SCALE GENOMIC DNA]</scope>
    <source>
        <strain>EC4115 / EHEC</strain>
    </source>
</reference>
<feature type="chain" id="PRO_1000137767" description="Chaperone modulatory protein CbpM">
    <location>
        <begin position="1"/>
        <end position="101"/>
    </location>
</feature>
<comment type="function">
    <text evidence="1">Interacts with CbpA and inhibits both the DnaJ-like co-chaperone activity and the DNA binding activity of CbpA. Together with CbpA, modulates the activity of the DnaK chaperone system. Does not inhibit the co-chaperone activity of DnaJ.</text>
</comment>
<comment type="similarity">
    <text evidence="1">Belongs to the CbpM family.</text>
</comment>
<organism>
    <name type="scientific">Escherichia coli O157:H7 (strain EC4115 / EHEC)</name>
    <dbReference type="NCBI Taxonomy" id="444450"/>
    <lineage>
        <taxon>Bacteria</taxon>
        <taxon>Pseudomonadati</taxon>
        <taxon>Pseudomonadota</taxon>
        <taxon>Gammaproteobacteria</taxon>
        <taxon>Enterobacterales</taxon>
        <taxon>Enterobacteriaceae</taxon>
        <taxon>Escherichia</taxon>
    </lineage>
</organism>
<protein>
    <recommendedName>
        <fullName evidence="1">Chaperone modulatory protein CbpM</fullName>
    </recommendedName>
</protein>
<sequence>MANVTVTFTITEFCLHTGISEEELNEIVGLGVVEPREIQETTWVFDDHAAIVVQRAVRLRHELALDWPGIAVALTLMDDIAHLKQENRLLRQRLSRFVAHP</sequence>
<evidence type="ECO:0000255" key="1">
    <source>
        <dbReference type="HAMAP-Rule" id="MF_01155"/>
    </source>
</evidence>
<gene>
    <name evidence="1" type="primary">cbpM</name>
    <name type="ordered locus">ECH74115_1235</name>
</gene>
<proteinExistence type="inferred from homology"/>
<name>CBPM_ECO5E</name>